<dbReference type="EMBL" id="AE009949">
    <property type="protein sequence ID" value="AAL98399.1"/>
    <property type="molecule type" value="Genomic_DNA"/>
</dbReference>
<dbReference type="RefSeq" id="WP_002983117.1">
    <property type="nucleotide sequence ID" value="NC_003485.1"/>
</dbReference>
<dbReference type="SMR" id="P66601"/>
<dbReference type="GeneID" id="83689976"/>
<dbReference type="KEGG" id="spm:spyM18_1897"/>
<dbReference type="HOGENOM" id="CLU_113441_5_3_9"/>
<dbReference type="GO" id="GO:0005737">
    <property type="term" value="C:cytoplasm"/>
    <property type="evidence" value="ECO:0007669"/>
    <property type="project" value="UniProtKB-ARBA"/>
</dbReference>
<dbReference type="GO" id="GO:1990904">
    <property type="term" value="C:ribonucleoprotein complex"/>
    <property type="evidence" value="ECO:0007669"/>
    <property type="project" value="UniProtKB-KW"/>
</dbReference>
<dbReference type="GO" id="GO:0005840">
    <property type="term" value="C:ribosome"/>
    <property type="evidence" value="ECO:0007669"/>
    <property type="project" value="UniProtKB-KW"/>
</dbReference>
<dbReference type="GO" id="GO:0070181">
    <property type="term" value="F:small ribosomal subunit rRNA binding"/>
    <property type="evidence" value="ECO:0007669"/>
    <property type="project" value="TreeGrafter"/>
</dbReference>
<dbReference type="GO" id="GO:0003735">
    <property type="term" value="F:structural constituent of ribosome"/>
    <property type="evidence" value="ECO:0007669"/>
    <property type="project" value="InterPro"/>
</dbReference>
<dbReference type="GO" id="GO:0006412">
    <property type="term" value="P:translation"/>
    <property type="evidence" value="ECO:0007669"/>
    <property type="project" value="UniProtKB-UniRule"/>
</dbReference>
<dbReference type="CDD" id="cd00473">
    <property type="entry name" value="bS6"/>
    <property type="match status" value="1"/>
</dbReference>
<dbReference type="FunFam" id="3.30.70.60:FF:000002">
    <property type="entry name" value="30S ribosomal protein S6"/>
    <property type="match status" value="1"/>
</dbReference>
<dbReference type="Gene3D" id="3.30.70.60">
    <property type="match status" value="1"/>
</dbReference>
<dbReference type="HAMAP" id="MF_00360">
    <property type="entry name" value="Ribosomal_bS6"/>
    <property type="match status" value="1"/>
</dbReference>
<dbReference type="InterPro" id="IPR000529">
    <property type="entry name" value="Ribosomal_bS6"/>
</dbReference>
<dbReference type="InterPro" id="IPR035980">
    <property type="entry name" value="Ribosomal_bS6_sf"/>
</dbReference>
<dbReference type="InterPro" id="IPR020814">
    <property type="entry name" value="Ribosomal_S6_plastid/chlpt"/>
</dbReference>
<dbReference type="InterPro" id="IPR014717">
    <property type="entry name" value="Transl_elong_EF1B/ribsomal_bS6"/>
</dbReference>
<dbReference type="NCBIfam" id="TIGR00166">
    <property type="entry name" value="S6"/>
    <property type="match status" value="1"/>
</dbReference>
<dbReference type="PANTHER" id="PTHR21011">
    <property type="entry name" value="MITOCHONDRIAL 28S RIBOSOMAL PROTEIN S6"/>
    <property type="match status" value="1"/>
</dbReference>
<dbReference type="PANTHER" id="PTHR21011:SF1">
    <property type="entry name" value="SMALL RIBOSOMAL SUBUNIT PROTEIN BS6M"/>
    <property type="match status" value="1"/>
</dbReference>
<dbReference type="Pfam" id="PF01250">
    <property type="entry name" value="Ribosomal_S6"/>
    <property type="match status" value="1"/>
</dbReference>
<dbReference type="SUPFAM" id="SSF54995">
    <property type="entry name" value="Ribosomal protein S6"/>
    <property type="match status" value="1"/>
</dbReference>
<feature type="chain" id="PRO_0000176853" description="Small ribosomal subunit protein bS6">
    <location>
        <begin position="1"/>
        <end position="96"/>
    </location>
</feature>
<gene>
    <name evidence="1" type="primary">rpsF</name>
    <name type="ordered locus">spyM18_1897</name>
</gene>
<comment type="function">
    <text evidence="1">Binds together with bS18 to 16S ribosomal RNA.</text>
</comment>
<comment type="similarity">
    <text evidence="1">Belongs to the bacterial ribosomal protein bS6 family.</text>
</comment>
<reference key="1">
    <citation type="journal article" date="2002" name="Proc. Natl. Acad. Sci. U.S.A.">
        <title>Genome sequence and comparative microarray analysis of serotype M18 group A Streptococcus strains associated with acute rheumatic fever outbreaks.</title>
        <authorList>
            <person name="Smoot J.C."/>
            <person name="Barbian K.D."/>
            <person name="Van Gompel J.J."/>
            <person name="Smoot L.M."/>
            <person name="Chaussee M.S."/>
            <person name="Sylva G.L."/>
            <person name="Sturdevant D.E."/>
            <person name="Ricklefs S.M."/>
            <person name="Porcella S.F."/>
            <person name="Parkins L.D."/>
            <person name="Beres S.B."/>
            <person name="Campbell D.S."/>
            <person name="Smith T.M."/>
            <person name="Zhang Q."/>
            <person name="Kapur V."/>
            <person name="Daly J.A."/>
            <person name="Veasy L.G."/>
            <person name="Musser J.M."/>
        </authorList>
    </citation>
    <scope>NUCLEOTIDE SEQUENCE [LARGE SCALE GENOMIC DNA]</scope>
    <source>
        <strain>MGAS8232</strain>
    </source>
</reference>
<protein>
    <recommendedName>
        <fullName evidence="1">Small ribosomal subunit protein bS6</fullName>
    </recommendedName>
    <alternativeName>
        <fullName evidence="2">30S ribosomal protein S6</fullName>
    </alternativeName>
</protein>
<evidence type="ECO:0000255" key="1">
    <source>
        <dbReference type="HAMAP-Rule" id="MF_00360"/>
    </source>
</evidence>
<evidence type="ECO:0000305" key="2"/>
<organism>
    <name type="scientific">Streptococcus pyogenes serotype M18 (strain MGAS8232)</name>
    <dbReference type="NCBI Taxonomy" id="186103"/>
    <lineage>
        <taxon>Bacteria</taxon>
        <taxon>Bacillati</taxon>
        <taxon>Bacillota</taxon>
        <taxon>Bacilli</taxon>
        <taxon>Lactobacillales</taxon>
        <taxon>Streptococcaceae</taxon>
        <taxon>Streptococcus</taxon>
    </lineage>
</organism>
<name>RS6_STRP8</name>
<proteinExistence type="inferred from homology"/>
<accession>P66601</accession>
<accession>Q99Y79</accession>
<sequence length="96" mass="11082">MAKYEILYIIRPNIEEEAKNALVARFDSILTDNGATVVESKDWEKRRLAYEINDFREGLYHIVNLEATDAAALNEFDRLSKINGDILRHMIVKLDA</sequence>
<keyword id="KW-0687">Ribonucleoprotein</keyword>
<keyword id="KW-0689">Ribosomal protein</keyword>
<keyword id="KW-0694">RNA-binding</keyword>
<keyword id="KW-0699">rRNA-binding</keyword>